<name>Y039_MYCTO</name>
<accession>P9WM88</accession>
<accession>L0T5I0</accession>
<accession>P71609</accession>
<accession>P71696</accession>
<feature type="chain" id="PRO_0000427346" description="Uncharacterized protein MT0044">
    <location>
        <begin position="1"/>
        <end position="115"/>
    </location>
</feature>
<feature type="transmembrane region" description="Helical" evidence="1">
    <location>
        <begin position="1"/>
        <end position="21"/>
    </location>
</feature>
<feature type="transmembrane region" description="Helical" evidence="1">
    <location>
        <begin position="33"/>
        <end position="53"/>
    </location>
</feature>
<feature type="transmembrane region" description="Helical" evidence="1">
    <location>
        <begin position="54"/>
        <end position="74"/>
    </location>
</feature>
<protein>
    <recommendedName>
        <fullName>Uncharacterized protein MT0044</fullName>
    </recommendedName>
</protein>
<evidence type="ECO:0000255" key="1"/>
<evidence type="ECO:0000305" key="2"/>
<reference key="1">
    <citation type="journal article" date="2002" name="J. Bacteriol.">
        <title>Whole-genome comparison of Mycobacterium tuberculosis clinical and laboratory strains.</title>
        <authorList>
            <person name="Fleischmann R.D."/>
            <person name="Alland D."/>
            <person name="Eisen J.A."/>
            <person name="Carpenter L."/>
            <person name="White O."/>
            <person name="Peterson J.D."/>
            <person name="DeBoy R.T."/>
            <person name="Dodson R.J."/>
            <person name="Gwinn M.L."/>
            <person name="Haft D.H."/>
            <person name="Hickey E.K."/>
            <person name="Kolonay J.F."/>
            <person name="Nelson W.C."/>
            <person name="Umayam L.A."/>
            <person name="Ermolaeva M.D."/>
            <person name="Salzberg S.L."/>
            <person name="Delcher A."/>
            <person name="Utterback T.R."/>
            <person name="Weidman J.F."/>
            <person name="Khouri H.M."/>
            <person name="Gill J."/>
            <person name="Mikula A."/>
            <person name="Bishai W."/>
            <person name="Jacobs W.R. Jr."/>
            <person name="Venter J.C."/>
            <person name="Fraser C.M."/>
        </authorList>
    </citation>
    <scope>NUCLEOTIDE SEQUENCE [LARGE SCALE GENOMIC DNA]</scope>
    <source>
        <strain>CDC 1551 / Oshkosh</strain>
    </source>
</reference>
<proteinExistence type="predicted"/>
<organism>
    <name type="scientific">Mycobacterium tuberculosis (strain CDC 1551 / Oshkosh)</name>
    <dbReference type="NCBI Taxonomy" id="83331"/>
    <lineage>
        <taxon>Bacteria</taxon>
        <taxon>Bacillati</taxon>
        <taxon>Actinomycetota</taxon>
        <taxon>Actinomycetes</taxon>
        <taxon>Mycobacteriales</taxon>
        <taxon>Mycobacteriaceae</taxon>
        <taxon>Mycobacterium</taxon>
        <taxon>Mycobacterium tuberculosis complex</taxon>
    </lineage>
</organism>
<comment type="subcellular location">
    <subcellularLocation>
        <location evidence="2">Cell membrane</location>
        <topology evidence="2">Multi-pass membrane protein</topology>
    </subcellularLocation>
</comment>
<comment type="similarity">
    <text evidence="2">To M.leprae ML0030.</text>
</comment>
<sequence>MFLAGVLCMCAAAASALFGSWSLCHTPTADPTALALRAMAPTQLAAAVMLAAGGVVAVAAPGHTALMVVIVCIAGAVGTLAAGSWQSAQYALRRETASPTANCVGSCAVCTQACH</sequence>
<keyword id="KW-1003">Cell membrane</keyword>
<keyword id="KW-0472">Membrane</keyword>
<keyword id="KW-1185">Reference proteome</keyword>
<keyword id="KW-0812">Transmembrane</keyword>
<keyword id="KW-1133">Transmembrane helix</keyword>
<dbReference type="EMBL" id="AE000516">
    <property type="protein sequence ID" value="AAK44267.1"/>
    <property type="molecule type" value="Genomic_DNA"/>
</dbReference>
<dbReference type="PIR" id="E70702">
    <property type="entry name" value="E70702"/>
</dbReference>
<dbReference type="RefSeq" id="WP_003907179.1">
    <property type="nucleotide sequence ID" value="NZ_KK341227.1"/>
</dbReference>
<dbReference type="KEGG" id="mtc:MT0044"/>
<dbReference type="PATRIC" id="fig|83331.31.peg.44"/>
<dbReference type="HOGENOM" id="CLU_147351_0_0_11"/>
<dbReference type="Proteomes" id="UP000001020">
    <property type="component" value="Chromosome"/>
</dbReference>
<dbReference type="GO" id="GO:0005886">
    <property type="term" value="C:plasma membrane"/>
    <property type="evidence" value="ECO:0007669"/>
    <property type="project" value="UniProtKB-SubCell"/>
</dbReference>
<gene>
    <name type="ordered locus">MT0044</name>
</gene>